<sequence>MAGKKTKSGMISHGMAAQNRKGRFDYTILETTEAGIVLKGPEVKSLRLGRATITEAYAAERDGEIWLFNSYIPEYQGGVLSRFEPRAPRKLLMHRKQIAHFLGAVSRAGASLVPLDIHFNARGMAKVTLGLGQGRRKEDKRHAIAERDWKRDKARLVRSSGKDY</sequence>
<reference key="1">
    <citation type="journal article" date="2005" name="Nat. Biotechnol.">
        <title>Complete genome sequence of the acetic acid bacterium Gluconobacter oxydans.</title>
        <authorList>
            <person name="Prust C."/>
            <person name="Hoffmeister M."/>
            <person name="Liesegang H."/>
            <person name="Wiezer A."/>
            <person name="Fricke W.F."/>
            <person name="Ehrenreich A."/>
            <person name="Gottschalk G."/>
            <person name="Deppenmeier U."/>
        </authorList>
    </citation>
    <scope>NUCLEOTIDE SEQUENCE [LARGE SCALE GENOMIC DNA]</scope>
    <source>
        <strain>621H</strain>
    </source>
</reference>
<proteinExistence type="inferred from homology"/>
<name>SSRP_GLUOX</name>
<feature type="chain" id="PRO_0000102955" description="SsrA-binding protein">
    <location>
        <begin position="1"/>
        <end position="164"/>
    </location>
</feature>
<dbReference type="EMBL" id="CP000009">
    <property type="protein sequence ID" value="AAW59857.1"/>
    <property type="molecule type" value="Genomic_DNA"/>
</dbReference>
<dbReference type="RefSeq" id="WP_011251661.1">
    <property type="nucleotide sequence ID" value="NZ_LT900338.1"/>
</dbReference>
<dbReference type="SMR" id="Q5FUX0"/>
<dbReference type="STRING" id="290633.GOX0060"/>
<dbReference type="GeneID" id="56904311"/>
<dbReference type="KEGG" id="gox:GOX0060"/>
<dbReference type="eggNOG" id="COG0691">
    <property type="taxonomic scope" value="Bacteria"/>
</dbReference>
<dbReference type="HOGENOM" id="CLU_108953_0_1_5"/>
<dbReference type="Proteomes" id="UP000006375">
    <property type="component" value="Chromosome"/>
</dbReference>
<dbReference type="GO" id="GO:0005829">
    <property type="term" value="C:cytosol"/>
    <property type="evidence" value="ECO:0007669"/>
    <property type="project" value="TreeGrafter"/>
</dbReference>
<dbReference type="GO" id="GO:0003723">
    <property type="term" value="F:RNA binding"/>
    <property type="evidence" value="ECO:0007669"/>
    <property type="project" value="UniProtKB-UniRule"/>
</dbReference>
<dbReference type="GO" id="GO:0070929">
    <property type="term" value="P:trans-translation"/>
    <property type="evidence" value="ECO:0007669"/>
    <property type="project" value="UniProtKB-UniRule"/>
</dbReference>
<dbReference type="CDD" id="cd09294">
    <property type="entry name" value="SmpB"/>
    <property type="match status" value="1"/>
</dbReference>
<dbReference type="Gene3D" id="2.40.280.10">
    <property type="match status" value="1"/>
</dbReference>
<dbReference type="HAMAP" id="MF_00023">
    <property type="entry name" value="SmpB"/>
    <property type="match status" value="1"/>
</dbReference>
<dbReference type="InterPro" id="IPR023620">
    <property type="entry name" value="SmpB"/>
</dbReference>
<dbReference type="InterPro" id="IPR000037">
    <property type="entry name" value="SsrA-bd_prot"/>
</dbReference>
<dbReference type="InterPro" id="IPR020081">
    <property type="entry name" value="SsrA-bd_prot_CS"/>
</dbReference>
<dbReference type="NCBIfam" id="NF003843">
    <property type="entry name" value="PRK05422.1"/>
    <property type="match status" value="1"/>
</dbReference>
<dbReference type="NCBIfam" id="TIGR00086">
    <property type="entry name" value="smpB"/>
    <property type="match status" value="1"/>
</dbReference>
<dbReference type="PANTHER" id="PTHR30308:SF2">
    <property type="entry name" value="SSRA-BINDING PROTEIN"/>
    <property type="match status" value="1"/>
</dbReference>
<dbReference type="PANTHER" id="PTHR30308">
    <property type="entry name" value="TMRNA-BINDING COMPONENT OF TRANS-TRANSLATION TAGGING COMPLEX"/>
    <property type="match status" value="1"/>
</dbReference>
<dbReference type="Pfam" id="PF01668">
    <property type="entry name" value="SmpB"/>
    <property type="match status" value="1"/>
</dbReference>
<dbReference type="SUPFAM" id="SSF74982">
    <property type="entry name" value="Small protein B (SmpB)"/>
    <property type="match status" value="1"/>
</dbReference>
<dbReference type="PROSITE" id="PS01317">
    <property type="entry name" value="SSRP"/>
    <property type="match status" value="1"/>
</dbReference>
<organism>
    <name type="scientific">Gluconobacter oxydans (strain 621H)</name>
    <name type="common">Gluconobacter suboxydans</name>
    <dbReference type="NCBI Taxonomy" id="290633"/>
    <lineage>
        <taxon>Bacteria</taxon>
        <taxon>Pseudomonadati</taxon>
        <taxon>Pseudomonadota</taxon>
        <taxon>Alphaproteobacteria</taxon>
        <taxon>Acetobacterales</taxon>
        <taxon>Acetobacteraceae</taxon>
        <taxon>Gluconobacter</taxon>
    </lineage>
</organism>
<gene>
    <name evidence="1" type="primary">smpB</name>
    <name type="ordered locus">GOX0060</name>
</gene>
<protein>
    <recommendedName>
        <fullName evidence="1">SsrA-binding protein</fullName>
    </recommendedName>
    <alternativeName>
        <fullName evidence="1">Small protein B</fullName>
    </alternativeName>
</protein>
<keyword id="KW-0963">Cytoplasm</keyword>
<keyword id="KW-1185">Reference proteome</keyword>
<keyword id="KW-0694">RNA-binding</keyword>
<comment type="function">
    <text evidence="1">Required for rescue of stalled ribosomes mediated by trans-translation. Binds to transfer-messenger RNA (tmRNA), required for stable association of tmRNA with ribosomes. tmRNA and SmpB together mimic tRNA shape, replacing the anticodon stem-loop with SmpB. tmRNA is encoded by the ssrA gene; the 2 termini fold to resemble tRNA(Ala) and it encodes a 'tag peptide', a short internal open reading frame. During trans-translation Ala-aminoacylated tmRNA acts like a tRNA, entering the A-site of stalled ribosomes, displacing the stalled mRNA. The ribosome then switches to translate the ORF on the tmRNA; the nascent peptide is terminated with the 'tag peptide' encoded by the tmRNA and targeted for degradation. The ribosome is freed to recommence translation, which seems to be the essential function of trans-translation.</text>
</comment>
<comment type="subcellular location">
    <subcellularLocation>
        <location evidence="1">Cytoplasm</location>
    </subcellularLocation>
    <text evidence="1">The tmRNA-SmpB complex associates with stalled 70S ribosomes.</text>
</comment>
<comment type="similarity">
    <text evidence="1">Belongs to the SmpB family.</text>
</comment>
<accession>Q5FUX0</accession>
<evidence type="ECO:0000255" key="1">
    <source>
        <dbReference type="HAMAP-Rule" id="MF_00023"/>
    </source>
</evidence>